<name>TIG_RUTMC</name>
<reference key="1">
    <citation type="journal article" date="2007" name="Science">
        <title>The Calyptogena magnifica chemoautotrophic symbiont genome.</title>
        <authorList>
            <person name="Newton I.L.G."/>
            <person name="Woyke T."/>
            <person name="Auchtung T.A."/>
            <person name="Dilly G.F."/>
            <person name="Dutton R.J."/>
            <person name="Fisher M.C."/>
            <person name="Fontanez K.M."/>
            <person name="Lau E."/>
            <person name="Stewart F.J."/>
            <person name="Richardson P.M."/>
            <person name="Barry K.W."/>
            <person name="Saunders E."/>
            <person name="Detter J.C."/>
            <person name="Wu D."/>
            <person name="Eisen J.A."/>
            <person name="Cavanaugh C.M."/>
        </authorList>
    </citation>
    <scope>NUCLEOTIDE SEQUENCE [LARGE SCALE GENOMIC DNA]</scope>
</reference>
<proteinExistence type="inferred from homology"/>
<dbReference type="EC" id="5.2.1.8" evidence="1"/>
<dbReference type="EMBL" id="CP000488">
    <property type="protein sequence ID" value="ABL01992.1"/>
    <property type="molecule type" value="Genomic_DNA"/>
</dbReference>
<dbReference type="RefSeq" id="WP_011737617.1">
    <property type="nucleotide sequence ID" value="NC_008610.1"/>
</dbReference>
<dbReference type="SMR" id="A1AVN5"/>
<dbReference type="STRING" id="413404.Rmag_0204"/>
<dbReference type="KEGG" id="rma:Rmag_0204"/>
<dbReference type="eggNOG" id="COG0544">
    <property type="taxonomic scope" value="Bacteria"/>
</dbReference>
<dbReference type="HOGENOM" id="CLU_033058_2_0_6"/>
<dbReference type="OrthoDB" id="9767721at2"/>
<dbReference type="Proteomes" id="UP000002587">
    <property type="component" value="Chromosome"/>
</dbReference>
<dbReference type="GO" id="GO:0005737">
    <property type="term" value="C:cytoplasm"/>
    <property type="evidence" value="ECO:0007669"/>
    <property type="project" value="UniProtKB-SubCell"/>
</dbReference>
<dbReference type="GO" id="GO:0003755">
    <property type="term" value="F:peptidyl-prolyl cis-trans isomerase activity"/>
    <property type="evidence" value="ECO:0007669"/>
    <property type="project" value="UniProtKB-UniRule"/>
</dbReference>
<dbReference type="GO" id="GO:0044183">
    <property type="term" value="F:protein folding chaperone"/>
    <property type="evidence" value="ECO:0007669"/>
    <property type="project" value="TreeGrafter"/>
</dbReference>
<dbReference type="GO" id="GO:0043022">
    <property type="term" value="F:ribosome binding"/>
    <property type="evidence" value="ECO:0007669"/>
    <property type="project" value="TreeGrafter"/>
</dbReference>
<dbReference type="GO" id="GO:0051083">
    <property type="term" value="P:'de novo' cotranslational protein folding"/>
    <property type="evidence" value="ECO:0007669"/>
    <property type="project" value="TreeGrafter"/>
</dbReference>
<dbReference type="GO" id="GO:0051301">
    <property type="term" value="P:cell division"/>
    <property type="evidence" value="ECO:0007669"/>
    <property type="project" value="UniProtKB-KW"/>
</dbReference>
<dbReference type="GO" id="GO:0061077">
    <property type="term" value="P:chaperone-mediated protein folding"/>
    <property type="evidence" value="ECO:0007669"/>
    <property type="project" value="TreeGrafter"/>
</dbReference>
<dbReference type="GO" id="GO:0015031">
    <property type="term" value="P:protein transport"/>
    <property type="evidence" value="ECO:0007669"/>
    <property type="project" value="UniProtKB-UniRule"/>
</dbReference>
<dbReference type="GO" id="GO:0043335">
    <property type="term" value="P:protein unfolding"/>
    <property type="evidence" value="ECO:0007669"/>
    <property type="project" value="TreeGrafter"/>
</dbReference>
<dbReference type="FunFam" id="3.10.50.40:FF:000001">
    <property type="entry name" value="Trigger factor"/>
    <property type="match status" value="1"/>
</dbReference>
<dbReference type="Gene3D" id="3.10.50.40">
    <property type="match status" value="1"/>
</dbReference>
<dbReference type="Gene3D" id="3.30.70.1050">
    <property type="entry name" value="Trigger factor ribosome-binding domain"/>
    <property type="match status" value="1"/>
</dbReference>
<dbReference type="Gene3D" id="1.10.3120.10">
    <property type="entry name" value="Trigger factor, C-terminal domain"/>
    <property type="match status" value="1"/>
</dbReference>
<dbReference type="HAMAP" id="MF_00303">
    <property type="entry name" value="Trigger_factor_Tig"/>
    <property type="match status" value="1"/>
</dbReference>
<dbReference type="InterPro" id="IPR046357">
    <property type="entry name" value="PPIase_dom_sf"/>
</dbReference>
<dbReference type="InterPro" id="IPR001179">
    <property type="entry name" value="PPIase_FKBP_dom"/>
</dbReference>
<dbReference type="InterPro" id="IPR005215">
    <property type="entry name" value="Trig_fac"/>
</dbReference>
<dbReference type="InterPro" id="IPR008880">
    <property type="entry name" value="Trigger_fac_C"/>
</dbReference>
<dbReference type="InterPro" id="IPR037041">
    <property type="entry name" value="Trigger_fac_C_sf"/>
</dbReference>
<dbReference type="InterPro" id="IPR008881">
    <property type="entry name" value="Trigger_fac_ribosome-bd_bac"/>
</dbReference>
<dbReference type="InterPro" id="IPR036611">
    <property type="entry name" value="Trigger_fac_ribosome-bd_sf"/>
</dbReference>
<dbReference type="InterPro" id="IPR027304">
    <property type="entry name" value="Trigger_fact/SurA_dom_sf"/>
</dbReference>
<dbReference type="NCBIfam" id="TIGR00115">
    <property type="entry name" value="tig"/>
    <property type="match status" value="1"/>
</dbReference>
<dbReference type="PANTHER" id="PTHR30560">
    <property type="entry name" value="TRIGGER FACTOR CHAPERONE AND PEPTIDYL-PROLYL CIS/TRANS ISOMERASE"/>
    <property type="match status" value="1"/>
</dbReference>
<dbReference type="PANTHER" id="PTHR30560:SF3">
    <property type="entry name" value="TRIGGER FACTOR-LIKE PROTEIN TIG, CHLOROPLASTIC"/>
    <property type="match status" value="1"/>
</dbReference>
<dbReference type="Pfam" id="PF00254">
    <property type="entry name" value="FKBP_C"/>
    <property type="match status" value="1"/>
</dbReference>
<dbReference type="Pfam" id="PF05698">
    <property type="entry name" value="Trigger_C"/>
    <property type="match status" value="1"/>
</dbReference>
<dbReference type="Pfam" id="PF05697">
    <property type="entry name" value="Trigger_N"/>
    <property type="match status" value="1"/>
</dbReference>
<dbReference type="PIRSF" id="PIRSF003095">
    <property type="entry name" value="Trigger_factor"/>
    <property type="match status" value="1"/>
</dbReference>
<dbReference type="SUPFAM" id="SSF54534">
    <property type="entry name" value="FKBP-like"/>
    <property type="match status" value="1"/>
</dbReference>
<dbReference type="SUPFAM" id="SSF109998">
    <property type="entry name" value="Triger factor/SurA peptide-binding domain-like"/>
    <property type="match status" value="1"/>
</dbReference>
<dbReference type="SUPFAM" id="SSF102735">
    <property type="entry name" value="Trigger factor ribosome-binding domain"/>
    <property type="match status" value="1"/>
</dbReference>
<dbReference type="PROSITE" id="PS50059">
    <property type="entry name" value="FKBP_PPIASE"/>
    <property type="match status" value="1"/>
</dbReference>
<protein>
    <recommendedName>
        <fullName evidence="1">Trigger factor</fullName>
        <shortName evidence="1">TF</shortName>
        <ecNumber evidence="1">5.2.1.8</ecNumber>
    </recommendedName>
    <alternativeName>
        <fullName evidence="1">PPIase</fullName>
    </alternativeName>
</protein>
<comment type="function">
    <text evidence="1">Involved in protein export. Acts as a chaperone by maintaining the newly synthesized protein in an open conformation. Functions as a peptidyl-prolyl cis-trans isomerase.</text>
</comment>
<comment type="catalytic activity">
    <reaction evidence="1">
        <text>[protein]-peptidylproline (omega=180) = [protein]-peptidylproline (omega=0)</text>
        <dbReference type="Rhea" id="RHEA:16237"/>
        <dbReference type="Rhea" id="RHEA-COMP:10747"/>
        <dbReference type="Rhea" id="RHEA-COMP:10748"/>
        <dbReference type="ChEBI" id="CHEBI:83833"/>
        <dbReference type="ChEBI" id="CHEBI:83834"/>
        <dbReference type="EC" id="5.2.1.8"/>
    </reaction>
</comment>
<comment type="subcellular location">
    <subcellularLocation>
        <location>Cytoplasm</location>
    </subcellularLocation>
    <text evidence="1">About half TF is bound to the ribosome near the polypeptide exit tunnel while the other half is free in the cytoplasm.</text>
</comment>
<comment type="domain">
    <text evidence="1">Consists of 3 domains; the N-terminus binds the ribosome, the middle domain has PPIase activity, while the C-terminus has intrinsic chaperone activity on its own.</text>
</comment>
<comment type="similarity">
    <text evidence="1">Belongs to the FKBP-type PPIase family. Tig subfamily.</text>
</comment>
<sequence length="429" mass="48144">MKASLEILKGLDRSLTVDLPIDIFNQKTDKILQKIASQVNFDGFRKGKVPVAVVRKRFGNNVNSDAINEIVNETLTDALTQVKATPVSQPVISKIDSEDEKNFSYTVDFEVFPEIKVADFSKLTIEQIKVEITKADEQRTLNGLKEQLTEYKAVKRKSEIGDRLSIDFKGLIDGKTFDGAEAKDFKIVLGKGSMIKGFEEGLIDVTPNSMLMLDLVFPKNYHMNKLSGKAVTFEININEVALPKEPKLNEVFAKKFGEKDMDALKVSIKMQMKVEIDGRIGYLNKNAIFDALSEANQFDVPQSSIDNEAQNLLKEMKERIQQQGGLPAQGEIPASAFNDEAQRRVKLGLLVNQISNDNKLSASLEQIDAKLQEISQAHGKDTQKIIDSYNQDPTKKLSIELLVIEKMVQDLILDKAKVTFKQKKFQEIT</sequence>
<organism>
    <name type="scientific">Ruthia magnifica subsp. Calyptogena magnifica</name>
    <dbReference type="NCBI Taxonomy" id="413404"/>
    <lineage>
        <taxon>Bacteria</taxon>
        <taxon>Pseudomonadati</taxon>
        <taxon>Pseudomonadota</taxon>
        <taxon>Gammaproteobacteria</taxon>
        <taxon>Candidatus Pseudothioglobaceae</taxon>
        <taxon>Candidatus Ruthturnera</taxon>
    </lineage>
</organism>
<keyword id="KW-0131">Cell cycle</keyword>
<keyword id="KW-0132">Cell division</keyword>
<keyword id="KW-0143">Chaperone</keyword>
<keyword id="KW-0963">Cytoplasm</keyword>
<keyword id="KW-0413">Isomerase</keyword>
<keyword id="KW-0697">Rotamase</keyword>
<accession>A1AVN5</accession>
<feature type="chain" id="PRO_1000022749" description="Trigger factor">
    <location>
        <begin position="1"/>
        <end position="429"/>
    </location>
</feature>
<feature type="domain" description="PPIase FKBP-type" evidence="1">
    <location>
        <begin position="161"/>
        <end position="246"/>
    </location>
</feature>
<gene>
    <name evidence="1" type="primary">tig</name>
    <name type="ordered locus">Rmag_0204</name>
</gene>
<evidence type="ECO:0000255" key="1">
    <source>
        <dbReference type="HAMAP-Rule" id="MF_00303"/>
    </source>
</evidence>